<name>Y2606_STAAW</name>
<protein>
    <recommendedName>
        <fullName>UPF0312 protein MW2606</fullName>
    </recommendedName>
</protein>
<reference key="1">
    <citation type="journal article" date="2002" name="Lancet">
        <title>Genome and virulence determinants of high virulence community-acquired MRSA.</title>
        <authorList>
            <person name="Baba T."/>
            <person name="Takeuchi F."/>
            <person name="Kuroda M."/>
            <person name="Yuzawa H."/>
            <person name="Aoki K."/>
            <person name="Oguchi A."/>
            <person name="Nagai Y."/>
            <person name="Iwama N."/>
            <person name="Asano K."/>
            <person name="Naimi T."/>
            <person name="Kuroda H."/>
            <person name="Cui L."/>
            <person name="Yamamoto K."/>
            <person name="Hiramatsu K."/>
        </authorList>
    </citation>
    <scope>NUCLEOTIDE SEQUENCE [LARGE SCALE GENOMIC DNA]</scope>
    <source>
        <strain>MW2</strain>
    </source>
</reference>
<organism>
    <name type="scientific">Staphylococcus aureus (strain MW2)</name>
    <dbReference type="NCBI Taxonomy" id="196620"/>
    <lineage>
        <taxon>Bacteria</taxon>
        <taxon>Bacillati</taxon>
        <taxon>Bacillota</taxon>
        <taxon>Bacilli</taxon>
        <taxon>Bacillales</taxon>
        <taxon>Staphylococcaceae</taxon>
        <taxon>Staphylococcus</taxon>
    </lineage>
</organism>
<evidence type="ECO:0000305" key="1"/>
<comment type="similarity">
    <text evidence="1">Belongs to the UPF0312 family.</text>
</comment>
<dbReference type="EMBL" id="BA000033">
    <property type="protein sequence ID" value="BAB96471.1"/>
    <property type="molecule type" value="Genomic_DNA"/>
</dbReference>
<dbReference type="RefSeq" id="WP_000181131.1">
    <property type="nucleotide sequence ID" value="NC_003923.1"/>
</dbReference>
<dbReference type="SMR" id="Q8NUH6"/>
<dbReference type="KEGG" id="sam:MW2606"/>
<dbReference type="HOGENOM" id="CLU_071003_3_0_9"/>
<dbReference type="Gene3D" id="2.40.128.110">
    <property type="entry name" value="Lipid/polyisoprenoid-binding, YceI-like"/>
    <property type="match status" value="1"/>
</dbReference>
<dbReference type="InterPro" id="IPR007372">
    <property type="entry name" value="Lipid/polyisoprenoid-bd_YceI"/>
</dbReference>
<dbReference type="InterPro" id="IPR036761">
    <property type="entry name" value="TTHA0802/YceI-like_sf"/>
</dbReference>
<dbReference type="PANTHER" id="PTHR34406">
    <property type="entry name" value="PROTEIN YCEI"/>
    <property type="match status" value="1"/>
</dbReference>
<dbReference type="PANTHER" id="PTHR34406:SF1">
    <property type="entry name" value="PROTEIN YCEI"/>
    <property type="match status" value="1"/>
</dbReference>
<dbReference type="Pfam" id="PF04264">
    <property type="entry name" value="YceI"/>
    <property type="match status" value="1"/>
</dbReference>
<dbReference type="SMART" id="SM00867">
    <property type="entry name" value="YceI"/>
    <property type="match status" value="1"/>
</dbReference>
<dbReference type="SUPFAM" id="SSF101874">
    <property type="entry name" value="YceI-like"/>
    <property type="match status" value="1"/>
</dbReference>
<sequence>MTNFTFDGAHSSLEFQIKHLMVSKVKGSFDQFDVAVEGDINDFSTLKATATIIPSSINTKNEARDNHLKSGDFFGTDEFDKITFVTKSVSESKVVGDLTIKGITNEETFDVEFNGVSKNPMDGSQVTGVIVTGTINRENYGINFNQALETGGVMLGKDVKFEASAEFSISE</sequence>
<feature type="chain" id="PRO_0000299512" description="UPF0312 protein MW2606">
    <location>
        <begin position="1"/>
        <end position="171"/>
    </location>
</feature>
<accession>Q8NUH6</accession>
<gene>
    <name type="ordered locus">MW2606</name>
</gene>
<proteinExistence type="inferred from homology"/>